<protein>
    <recommendedName>
        <fullName evidence="1">UPF0735 ACT domain-containing protein GK2605</fullName>
    </recommendedName>
</protein>
<name>Y2605_GEOKA</name>
<proteinExistence type="inferred from homology"/>
<comment type="similarity">
    <text evidence="1">Belongs to the UPF0735 family.</text>
</comment>
<gene>
    <name type="ordered locus">GK2605</name>
</gene>
<sequence>MEKKFYLVREDVLPEAMKKVVLAKQLLERKKAASVAEAAQLANISRGVFYKYRDAIFPFQAVTKENIVTLFFHLEDRSGTLSQLLGVVAAAGCNVLTIHQTIPLQGRANVTLSVSTNDMNEEIDELLAKLKQLEFVEKVEIVGSGVY</sequence>
<dbReference type="EMBL" id="BA000043">
    <property type="protein sequence ID" value="BAD76890.1"/>
    <property type="molecule type" value="Genomic_DNA"/>
</dbReference>
<dbReference type="RefSeq" id="WP_011232081.1">
    <property type="nucleotide sequence ID" value="NC_006510.1"/>
</dbReference>
<dbReference type="SMR" id="Q5KWP6"/>
<dbReference type="STRING" id="235909.GK2605"/>
<dbReference type="KEGG" id="gka:GK2605"/>
<dbReference type="eggNOG" id="COG4492">
    <property type="taxonomic scope" value="Bacteria"/>
</dbReference>
<dbReference type="HOGENOM" id="CLU_128147_0_0_9"/>
<dbReference type="Proteomes" id="UP000001172">
    <property type="component" value="Chromosome"/>
</dbReference>
<dbReference type="CDD" id="cd04888">
    <property type="entry name" value="ACT_PheB-BS"/>
    <property type="match status" value="1"/>
</dbReference>
<dbReference type="Gene3D" id="3.30.70.260">
    <property type="match status" value="1"/>
</dbReference>
<dbReference type="HAMAP" id="MF_00707">
    <property type="entry name" value="UPF0735"/>
    <property type="match status" value="1"/>
</dbReference>
<dbReference type="InterPro" id="IPR045865">
    <property type="entry name" value="ACT-like_dom_sf"/>
</dbReference>
<dbReference type="InterPro" id="IPR002912">
    <property type="entry name" value="ACT_dom"/>
</dbReference>
<dbReference type="InterPro" id="IPR008310">
    <property type="entry name" value="UPF0735_ACT_dom-cont"/>
</dbReference>
<dbReference type="NCBIfam" id="NF003361">
    <property type="entry name" value="PRK04435.1"/>
    <property type="match status" value="1"/>
</dbReference>
<dbReference type="Pfam" id="PF01842">
    <property type="entry name" value="ACT"/>
    <property type="match status" value="1"/>
</dbReference>
<dbReference type="PIRSF" id="PIRSF025624">
    <property type="entry name" value="ACT_PheB"/>
    <property type="match status" value="1"/>
</dbReference>
<dbReference type="SUPFAM" id="SSF55021">
    <property type="entry name" value="ACT-like"/>
    <property type="match status" value="1"/>
</dbReference>
<dbReference type="PROSITE" id="PS51671">
    <property type="entry name" value="ACT"/>
    <property type="match status" value="1"/>
</dbReference>
<feature type="chain" id="PRO_0000206473" description="UPF0735 ACT domain-containing protein GK2605">
    <location>
        <begin position="1"/>
        <end position="147"/>
    </location>
</feature>
<feature type="domain" description="ACT" evidence="1">
    <location>
        <begin position="69"/>
        <end position="144"/>
    </location>
</feature>
<evidence type="ECO:0000255" key="1">
    <source>
        <dbReference type="HAMAP-Rule" id="MF_00707"/>
    </source>
</evidence>
<reference key="1">
    <citation type="journal article" date="2004" name="Nucleic Acids Res.">
        <title>Thermoadaptation trait revealed by the genome sequence of thermophilic Geobacillus kaustophilus.</title>
        <authorList>
            <person name="Takami H."/>
            <person name="Takaki Y."/>
            <person name="Chee G.-J."/>
            <person name="Nishi S."/>
            <person name="Shimamura S."/>
            <person name="Suzuki H."/>
            <person name="Matsui S."/>
            <person name="Uchiyama I."/>
        </authorList>
    </citation>
    <scope>NUCLEOTIDE SEQUENCE [LARGE SCALE GENOMIC DNA]</scope>
    <source>
        <strain>HTA426</strain>
    </source>
</reference>
<organism>
    <name type="scientific">Geobacillus kaustophilus (strain HTA426)</name>
    <dbReference type="NCBI Taxonomy" id="235909"/>
    <lineage>
        <taxon>Bacteria</taxon>
        <taxon>Bacillati</taxon>
        <taxon>Bacillota</taxon>
        <taxon>Bacilli</taxon>
        <taxon>Bacillales</taxon>
        <taxon>Anoxybacillaceae</taxon>
        <taxon>Geobacillus</taxon>
        <taxon>Geobacillus thermoleovorans group</taxon>
    </lineage>
</organism>
<accession>Q5KWP6</accession>
<keyword id="KW-1185">Reference proteome</keyword>